<evidence type="ECO:0000255" key="1">
    <source>
        <dbReference type="HAMAP-Rule" id="MF_00127"/>
    </source>
</evidence>
<protein>
    <recommendedName>
        <fullName evidence="1">Histidine--tRNA ligase</fullName>
        <ecNumber evidence="1">6.1.1.21</ecNumber>
    </recommendedName>
    <alternativeName>
        <fullName evidence="1">Histidyl-tRNA synthetase</fullName>
        <shortName evidence="1">HisRS</shortName>
    </alternativeName>
</protein>
<keyword id="KW-0030">Aminoacyl-tRNA synthetase</keyword>
<keyword id="KW-0067">ATP-binding</keyword>
<keyword id="KW-0963">Cytoplasm</keyword>
<keyword id="KW-0436">Ligase</keyword>
<keyword id="KW-0547">Nucleotide-binding</keyword>
<keyword id="KW-0648">Protein biosynthesis</keyword>
<proteinExistence type="inferred from homology"/>
<comment type="catalytic activity">
    <reaction evidence="1">
        <text>tRNA(His) + L-histidine + ATP = L-histidyl-tRNA(His) + AMP + diphosphate + H(+)</text>
        <dbReference type="Rhea" id="RHEA:17313"/>
        <dbReference type="Rhea" id="RHEA-COMP:9665"/>
        <dbReference type="Rhea" id="RHEA-COMP:9689"/>
        <dbReference type="ChEBI" id="CHEBI:15378"/>
        <dbReference type="ChEBI" id="CHEBI:30616"/>
        <dbReference type="ChEBI" id="CHEBI:33019"/>
        <dbReference type="ChEBI" id="CHEBI:57595"/>
        <dbReference type="ChEBI" id="CHEBI:78442"/>
        <dbReference type="ChEBI" id="CHEBI:78527"/>
        <dbReference type="ChEBI" id="CHEBI:456215"/>
        <dbReference type="EC" id="6.1.1.21"/>
    </reaction>
</comment>
<comment type="subunit">
    <text evidence="1">Homodimer.</text>
</comment>
<comment type="subcellular location">
    <subcellularLocation>
        <location evidence="1">Cytoplasm</location>
    </subcellularLocation>
</comment>
<comment type="similarity">
    <text evidence="1">Belongs to the class-II aminoacyl-tRNA synthetase family.</text>
</comment>
<name>SYH_CHLPB</name>
<reference key="1">
    <citation type="submission" date="2008-06" db="EMBL/GenBank/DDBJ databases">
        <title>Complete sequence of Chlorobium phaeobacteroides BS1.</title>
        <authorList>
            <consortium name="US DOE Joint Genome Institute"/>
            <person name="Lucas S."/>
            <person name="Copeland A."/>
            <person name="Lapidus A."/>
            <person name="Glavina del Rio T."/>
            <person name="Dalin E."/>
            <person name="Tice H."/>
            <person name="Bruce D."/>
            <person name="Goodwin L."/>
            <person name="Pitluck S."/>
            <person name="Schmutz J."/>
            <person name="Larimer F."/>
            <person name="Land M."/>
            <person name="Hauser L."/>
            <person name="Kyrpides N."/>
            <person name="Ovchinnikova G."/>
            <person name="Li T."/>
            <person name="Liu Z."/>
            <person name="Zhao F."/>
            <person name="Overmann J."/>
            <person name="Bryant D.A."/>
            <person name="Richardson P."/>
        </authorList>
    </citation>
    <scope>NUCLEOTIDE SEQUENCE [LARGE SCALE GENOMIC DNA]</scope>
    <source>
        <strain>BS1</strain>
    </source>
</reference>
<gene>
    <name evidence="1" type="primary">hisS</name>
    <name type="ordered locus">Cphamn1_0397</name>
</gene>
<organism>
    <name type="scientific">Chlorobium phaeobacteroides (strain BS1)</name>
    <dbReference type="NCBI Taxonomy" id="331678"/>
    <lineage>
        <taxon>Bacteria</taxon>
        <taxon>Pseudomonadati</taxon>
        <taxon>Chlorobiota</taxon>
        <taxon>Chlorobiia</taxon>
        <taxon>Chlorobiales</taxon>
        <taxon>Chlorobiaceae</taxon>
        <taxon>Chlorobium/Pelodictyon group</taxon>
        <taxon>Chlorobium</taxon>
    </lineage>
</organism>
<feature type="chain" id="PRO_1000095538" description="Histidine--tRNA ligase">
    <location>
        <begin position="1"/>
        <end position="434"/>
    </location>
</feature>
<accession>B3ELN3</accession>
<dbReference type="EC" id="6.1.1.21" evidence="1"/>
<dbReference type="EMBL" id="CP001101">
    <property type="protein sequence ID" value="ACE03362.1"/>
    <property type="molecule type" value="Genomic_DNA"/>
</dbReference>
<dbReference type="SMR" id="B3ELN3"/>
<dbReference type="STRING" id="331678.Cphamn1_0397"/>
<dbReference type="KEGG" id="cpb:Cphamn1_0397"/>
<dbReference type="eggNOG" id="COG0124">
    <property type="taxonomic scope" value="Bacteria"/>
</dbReference>
<dbReference type="HOGENOM" id="CLU_025113_1_1_10"/>
<dbReference type="OrthoDB" id="9800814at2"/>
<dbReference type="GO" id="GO:0005737">
    <property type="term" value="C:cytoplasm"/>
    <property type="evidence" value="ECO:0007669"/>
    <property type="project" value="UniProtKB-SubCell"/>
</dbReference>
<dbReference type="GO" id="GO:0005524">
    <property type="term" value="F:ATP binding"/>
    <property type="evidence" value="ECO:0007669"/>
    <property type="project" value="UniProtKB-UniRule"/>
</dbReference>
<dbReference type="GO" id="GO:0004821">
    <property type="term" value="F:histidine-tRNA ligase activity"/>
    <property type="evidence" value="ECO:0007669"/>
    <property type="project" value="UniProtKB-UniRule"/>
</dbReference>
<dbReference type="GO" id="GO:0006427">
    <property type="term" value="P:histidyl-tRNA aminoacylation"/>
    <property type="evidence" value="ECO:0007669"/>
    <property type="project" value="UniProtKB-UniRule"/>
</dbReference>
<dbReference type="CDD" id="cd00773">
    <property type="entry name" value="HisRS-like_core"/>
    <property type="match status" value="1"/>
</dbReference>
<dbReference type="CDD" id="cd00859">
    <property type="entry name" value="HisRS_anticodon"/>
    <property type="match status" value="1"/>
</dbReference>
<dbReference type="Gene3D" id="3.40.50.800">
    <property type="entry name" value="Anticodon-binding domain"/>
    <property type="match status" value="1"/>
</dbReference>
<dbReference type="Gene3D" id="3.30.930.10">
    <property type="entry name" value="Bira Bifunctional Protein, Domain 2"/>
    <property type="match status" value="1"/>
</dbReference>
<dbReference type="HAMAP" id="MF_00127">
    <property type="entry name" value="His_tRNA_synth"/>
    <property type="match status" value="1"/>
</dbReference>
<dbReference type="InterPro" id="IPR006195">
    <property type="entry name" value="aa-tRNA-synth_II"/>
</dbReference>
<dbReference type="InterPro" id="IPR045864">
    <property type="entry name" value="aa-tRNA-synth_II/BPL/LPL"/>
</dbReference>
<dbReference type="InterPro" id="IPR004154">
    <property type="entry name" value="Anticodon-bd"/>
</dbReference>
<dbReference type="InterPro" id="IPR036621">
    <property type="entry name" value="Anticodon-bd_dom_sf"/>
</dbReference>
<dbReference type="InterPro" id="IPR015807">
    <property type="entry name" value="His-tRNA-ligase"/>
</dbReference>
<dbReference type="InterPro" id="IPR041715">
    <property type="entry name" value="HisRS-like_core"/>
</dbReference>
<dbReference type="InterPro" id="IPR004516">
    <property type="entry name" value="HisRS/HisZ"/>
</dbReference>
<dbReference type="InterPro" id="IPR033656">
    <property type="entry name" value="HisRS_anticodon"/>
</dbReference>
<dbReference type="NCBIfam" id="TIGR00442">
    <property type="entry name" value="hisS"/>
    <property type="match status" value="1"/>
</dbReference>
<dbReference type="PANTHER" id="PTHR43707:SF1">
    <property type="entry name" value="HISTIDINE--TRNA LIGASE, MITOCHONDRIAL-RELATED"/>
    <property type="match status" value="1"/>
</dbReference>
<dbReference type="PANTHER" id="PTHR43707">
    <property type="entry name" value="HISTIDYL-TRNA SYNTHETASE"/>
    <property type="match status" value="1"/>
</dbReference>
<dbReference type="Pfam" id="PF03129">
    <property type="entry name" value="HGTP_anticodon"/>
    <property type="match status" value="1"/>
</dbReference>
<dbReference type="Pfam" id="PF13393">
    <property type="entry name" value="tRNA-synt_His"/>
    <property type="match status" value="1"/>
</dbReference>
<dbReference type="PIRSF" id="PIRSF001549">
    <property type="entry name" value="His-tRNA_synth"/>
    <property type="match status" value="1"/>
</dbReference>
<dbReference type="SUPFAM" id="SSF52954">
    <property type="entry name" value="Class II aaRS ABD-related"/>
    <property type="match status" value="1"/>
</dbReference>
<dbReference type="SUPFAM" id="SSF55681">
    <property type="entry name" value="Class II aaRS and biotin synthetases"/>
    <property type="match status" value="1"/>
</dbReference>
<dbReference type="PROSITE" id="PS50862">
    <property type="entry name" value="AA_TRNA_LIGASE_II"/>
    <property type="match status" value="1"/>
</dbReference>
<sequence>MSEYRAVKGTKDIFPDEITSWKYIEGVIHRVVGLYGFQEIRTPVFEYTDLFQRSIGSTTDIVGKEMFSFRPEPDGRSVTLRPEMTAGVMRAFLQANLSSASPVHKLYYIAELFRKERPQAGRQRQFSQFGAEMLGASSPEAVAEVIDMMMQVFTSLGVSGLRLRINTLGDLDDRVRYRDALRAYLEPHSGLLDAPSRERLEKNPLRILDSKNPDIQSVIADAPKLHDFLNPSARAEFDQVLLYLDQKSIEYVIDPLLVRGLDYYCHTAFEVVSPELGAQDAIGGGGRYDGLARELGSKSDIPAVGFAVGMERLLITMEKQGLLRHIVPSGPRVYIVLQNEELKTHALSACDLLRRSGIRTEMDLCGRSMKAQMREANRQHADYALFVGKSEVESQAYGLKNLRTSEQDFLSIREMIARLASSTKHVEVPDGGPD</sequence>